<comment type="function">
    <text evidence="3">Amidase; part of the gene cluster that mediates the biosynthesis of the yellow pigment chrysogine (PubMed:29196288). the NRPS chyA mediates the condensation of anthranilic acid and alanine into the intermediate 2-(2-aminopropanamido)benzoic acid (PubMed:29196288). The remainder of the pathway is highly branched yielding at least 13 chrysogine-related compounds (PubMed:29196288). The malonyl transferase chyE converts 2-(2-aminopropanamido)benzoic acid and 2-(2-aminopropanamido)benzamidine into 2-(2-(2-carboxyacetamido)propanamido)benzoic acid and 3-((1-((2-carbamoylphenyl)amino)-1-oxopropan-2-yl)amino)-3-oxopropanoic acid, respectively (PubMed:29196288). ChyD is an amidase, being responsible for the amidation of the carboxylic acid moiety of 2-(2-aminopropanamido)benzoic acid, 2-(2-(2-carboxyacetamido)propanamido)benzoic acid and 2-(2-((4-amino-1-carboxy-4-oxobutyl)amino)propanamido)benzoic acid (PubMed:29196288). ChyC is involved in the same reactions as ChyD, but plays a more minor role in the amidation reactions compared to chyD (PubMed:29196288). The oxidoreductases chyH and chyM are involved in oxidation reactions that form N-pyruvoylanthranilamide from 2-(2-aminopropanamido)benzamidine and (1-((2-carbamoylphenyl)amino)-1-oxopropan-2-yl)glutamine, respectively (PubMed:29196288). N-pyruvoylanthranilamide is further converted via two further branches in the pathway, yielding chrysogine and additional chrysogine-related coumpounds (PubMed:29196288). Chrysogine is likely formed by a spontaneous ring closure from N-pyruvoylanthranilamide (PubMed:29196288).</text>
</comment>
<comment type="pathway">
    <text evidence="3">Pigment biosynthesis.</text>
</comment>
<comment type="disruption phenotype">
    <text evidence="3">Leads to a depletion of most chrysogine-related metabolites with accumulation of only 2-(2-aminopropanamido)benzoic acid, 2-(2-(2-carboxyacetamido)propanamido)benzoic acid and 2-(2-((4-amino-1-carboxy-4-oxobutyl)amino)propanamido)benzoic acid (PubMed:29196288).</text>
</comment>
<comment type="similarity">
    <text evidence="5">Belongs to the asparagine synthetase family.</text>
</comment>
<organism>
    <name type="scientific">Penicillium rubens (strain ATCC 28089 / DSM 1075 / NRRL 1951 / Wisconsin 54-1255)</name>
    <name type="common">Penicillium chrysogenum</name>
    <dbReference type="NCBI Taxonomy" id="500485"/>
    <lineage>
        <taxon>Eukaryota</taxon>
        <taxon>Fungi</taxon>
        <taxon>Dikarya</taxon>
        <taxon>Ascomycota</taxon>
        <taxon>Pezizomycotina</taxon>
        <taxon>Eurotiomycetes</taxon>
        <taxon>Eurotiomycetidae</taxon>
        <taxon>Eurotiales</taxon>
        <taxon>Aspergillaceae</taxon>
        <taxon>Penicillium</taxon>
        <taxon>Penicillium chrysogenum species complex</taxon>
    </lineage>
</organism>
<dbReference type="EC" id="3.-.-.-" evidence="3"/>
<dbReference type="EMBL" id="AM920436">
    <property type="protein sequence ID" value="CAP96159.1"/>
    <property type="molecule type" value="Genomic_DNA"/>
</dbReference>
<dbReference type="RefSeq" id="XP_002568289.1">
    <property type="nucleotide sequence ID" value="XM_002568243.1"/>
</dbReference>
<dbReference type="SMR" id="B6HLP8"/>
<dbReference type="STRING" id="500485.B6HLP8"/>
<dbReference type="VEuPathDB" id="FungiDB:PCH_Pc21g12620"/>
<dbReference type="eggNOG" id="KOG0571">
    <property type="taxonomic scope" value="Eukaryota"/>
</dbReference>
<dbReference type="HOGENOM" id="CLU_014658_1_0_1"/>
<dbReference type="OMA" id="HFILRYN"/>
<dbReference type="OrthoDB" id="409189at2759"/>
<dbReference type="BioCyc" id="PCHR:PC21G12620-MONOMER"/>
<dbReference type="Proteomes" id="UP000000724">
    <property type="component" value="Contig Pc00c21"/>
</dbReference>
<dbReference type="GO" id="GO:0005829">
    <property type="term" value="C:cytosol"/>
    <property type="evidence" value="ECO:0007669"/>
    <property type="project" value="TreeGrafter"/>
</dbReference>
<dbReference type="GO" id="GO:0004066">
    <property type="term" value="F:asparagine synthase (glutamine-hydrolyzing) activity"/>
    <property type="evidence" value="ECO:0007669"/>
    <property type="project" value="InterPro"/>
</dbReference>
<dbReference type="GO" id="GO:0005524">
    <property type="term" value="F:ATP binding"/>
    <property type="evidence" value="ECO:0007669"/>
    <property type="project" value="UniProtKB-KW"/>
</dbReference>
<dbReference type="GO" id="GO:0016787">
    <property type="term" value="F:hydrolase activity"/>
    <property type="evidence" value="ECO:0007669"/>
    <property type="project" value="UniProtKB-KW"/>
</dbReference>
<dbReference type="GO" id="GO:0006529">
    <property type="term" value="P:asparagine biosynthetic process"/>
    <property type="evidence" value="ECO:0007669"/>
    <property type="project" value="InterPro"/>
</dbReference>
<dbReference type="CDD" id="cd01991">
    <property type="entry name" value="Asn_synthase_B_C"/>
    <property type="match status" value="1"/>
</dbReference>
<dbReference type="CDD" id="cd00712">
    <property type="entry name" value="AsnB"/>
    <property type="match status" value="1"/>
</dbReference>
<dbReference type="Gene3D" id="3.60.20.10">
    <property type="entry name" value="Glutamine Phosphoribosylpyrophosphate, subunit 1, domain 1"/>
    <property type="match status" value="1"/>
</dbReference>
<dbReference type="Gene3D" id="3.40.50.620">
    <property type="entry name" value="HUPs"/>
    <property type="match status" value="2"/>
</dbReference>
<dbReference type="InterPro" id="IPR006426">
    <property type="entry name" value="Asn_synth_AEB"/>
</dbReference>
<dbReference type="InterPro" id="IPR001962">
    <property type="entry name" value="Asn_synthase"/>
</dbReference>
<dbReference type="InterPro" id="IPR051786">
    <property type="entry name" value="ASN_synthetase/amidase"/>
</dbReference>
<dbReference type="InterPro" id="IPR033738">
    <property type="entry name" value="AsnB_N"/>
</dbReference>
<dbReference type="InterPro" id="IPR017932">
    <property type="entry name" value="GATase_2_dom"/>
</dbReference>
<dbReference type="InterPro" id="IPR029055">
    <property type="entry name" value="Ntn_hydrolases_N"/>
</dbReference>
<dbReference type="InterPro" id="IPR014729">
    <property type="entry name" value="Rossmann-like_a/b/a_fold"/>
</dbReference>
<dbReference type="NCBIfam" id="TIGR01536">
    <property type="entry name" value="asn_synth_AEB"/>
    <property type="match status" value="1"/>
</dbReference>
<dbReference type="PANTHER" id="PTHR43284:SF1">
    <property type="entry name" value="ASPARAGINE SYNTHETASE"/>
    <property type="match status" value="1"/>
</dbReference>
<dbReference type="PANTHER" id="PTHR43284">
    <property type="entry name" value="ASPARAGINE SYNTHETASE (GLUTAMINE-HYDROLYZING)"/>
    <property type="match status" value="1"/>
</dbReference>
<dbReference type="Pfam" id="PF00733">
    <property type="entry name" value="Asn_synthase"/>
    <property type="match status" value="1"/>
</dbReference>
<dbReference type="Pfam" id="PF13537">
    <property type="entry name" value="GATase_7"/>
    <property type="match status" value="1"/>
</dbReference>
<dbReference type="PIRSF" id="PIRSF001589">
    <property type="entry name" value="Asn_synthetase_glu-h"/>
    <property type="match status" value="1"/>
</dbReference>
<dbReference type="SUPFAM" id="SSF52402">
    <property type="entry name" value="Adenine nucleotide alpha hydrolases-like"/>
    <property type="match status" value="1"/>
</dbReference>
<dbReference type="SUPFAM" id="SSF56235">
    <property type="entry name" value="N-terminal nucleophile aminohydrolases (Ntn hydrolases)"/>
    <property type="match status" value="1"/>
</dbReference>
<dbReference type="PROSITE" id="PS51278">
    <property type="entry name" value="GATASE_TYPE_2"/>
    <property type="match status" value="1"/>
</dbReference>
<evidence type="ECO:0000255" key="1"/>
<evidence type="ECO:0000255" key="2">
    <source>
        <dbReference type="PROSITE-ProRule" id="PRU00609"/>
    </source>
</evidence>
<evidence type="ECO:0000269" key="3">
    <source>
    </source>
</evidence>
<evidence type="ECO:0000303" key="4">
    <source>
    </source>
</evidence>
<evidence type="ECO:0000305" key="5"/>
<sequence>MCGISAFLCHPGKASSNEQANAQTRHVVDELEHSLDLVGHRGPDARGHIDILTIGLGHVRLSIIDLSLSGNQPFHDQDNSIHAVVNGELYDHEYYRDQLASEFQFVGTSDCEIVIALYKHYGLSFISHLRGEFAFVLWDANRQLLIAARDRYGIKSLYYTVVQGKLLVATEIKSFLAFGLQPEWCVRTLRDQSWRIESRTFFKGVHRVLPGHYLISRPNEREEQKPYWDLEYPDKLSHDARSEEEIVQGVRKRLLEAVKIRLKADVPVAIYLSGGIDSSSVAGMVADLMRQGTKLGNESNSVPSNMKCFTVQFDEDSGADESAIARRTANWLGVDIHLVKMDEEALASRFEDAVWHSEIPLPDLNGMGRLALAEAVHAQGIKVVITGEGSDEHFAGYDAFRADLLSEPDHSWPALQLPETDRQKALAMAAKQVKYGIFGEYSETVPDATKRMLNHSHVTSTIARVGSLPFSNWTTSYGNDLPETSLIEGFDGRVRDNITKRWHPLHTAQYLFTKSFMPHFILRYNGDNIDMVNQVESRCPFLDHHLTEYVNNVPPSLKLKYLPEEKSFREKYILREAVKPYVTDEIYNISKKAYMGPRKFWPGGPLHRKIKQLVTKENVESLGFVDWNATQEAVEKAFTKQDPMGLRRTITVAQFIVLGKRFGVKPAGALPN</sequence>
<gene>
    <name evidence="4" type="primary">chyD</name>
    <name type="ORF">Pc21g12620</name>
</gene>
<feature type="chain" id="PRO_0000443347" description="Amidase chyE">
    <location>
        <begin position="1"/>
        <end position="672"/>
    </location>
</feature>
<feature type="domain" description="Glutamine amidotransferase type-2" evidence="2">
    <location>
        <begin position="2"/>
        <end position="219"/>
    </location>
</feature>
<feature type="domain" description="Asparagine synthetase" evidence="1">
    <location>
        <begin position="250"/>
        <end position="639"/>
    </location>
</feature>
<feature type="active site" description="Nucleophile" evidence="2">
    <location>
        <position position="2"/>
    </location>
</feature>
<accession>B6HLP8</accession>
<protein>
    <recommendedName>
        <fullName evidence="5">Amidase chyE</fullName>
        <ecNumber evidence="3">3.-.-.-</ecNumber>
    </recommendedName>
    <alternativeName>
        <fullName evidence="4">Chrysogine biosynthesis cluster protein D</fullName>
    </alternativeName>
</protein>
<name>CHYD_PENRW</name>
<keyword id="KW-0067">ATP-binding</keyword>
<keyword id="KW-0315">Glutamine amidotransferase</keyword>
<keyword id="KW-0378">Hydrolase</keyword>
<keyword id="KW-0547">Nucleotide-binding</keyword>
<keyword id="KW-1185">Reference proteome</keyword>
<proteinExistence type="inferred from homology"/>
<reference key="1">
    <citation type="journal article" date="2008" name="Nat. Biotechnol.">
        <title>Genome sequencing and analysis of the filamentous fungus Penicillium chrysogenum.</title>
        <authorList>
            <person name="van den Berg M.A."/>
            <person name="Albang R."/>
            <person name="Albermann K."/>
            <person name="Badger J.H."/>
            <person name="Daran J.-M."/>
            <person name="Driessen A.J.M."/>
            <person name="Garcia-Estrada C."/>
            <person name="Fedorova N.D."/>
            <person name="Harris D.M."/>
            <person name="Heijne W.H.M."/>
            <person name="Joardar V.S."/>
            <person name="Kiel J.A.K.W."/>
            <person name="Kovalchuk A."/>
            <person name="Martin J.F."/>
            <person name="Nierman W.C."/>
            <person name="Nijland J.G."/>
            <person name="Pronk J.T."/>
            <person name="Roubos J.A."/>
            <person name="van der Klei I.J."/>
            <person name="van Peij N.N.M.E."/>
            <person name="Veenhuis M."/>
            <person name="von Doehren H."/>
            <person name="Wagner C."/>
            <person name="Wortman J.R."/>
            <person name="Bovenberg R.A.L."/>
        </authorList>
    </citation>
    <scope>NUCLEOTIDE SEQUENCE [LARGE SCALE GENOMIC DNA]</scope>
    <source>
        <strain>ATCC 28089 / DSM 1075 / NRRL 1951 / Wisconsin 54-1255</strain>
    </source>
</reference>
<reference key="2">
    <citation type="journal article" date="2017" name="Appl. Environ. Microbiol.">
        <title>Elucidation of the biosynthetic pathway for the production of the pigment chrysogine by Penicillium chrysogenum.</title>
        <authorList>
            <person name="Viggiano A."/>
            <person name="Salo O."/>
            <person name="Ali H."/>
            <person name="Szymanski W."/>
            <person name="Lankhorst P.P."/>
            <person name="Nygaard Y."/>
            <person name="Bovenberg R.A.L."/>
            <person name="Driessen A.J.M."/>
        </authorList>
    </citation>
    <scope>FUNCTION</scope>
    <scope>DISRUPTION PHENOTYPE</scope>
</reference>